<proteinExistence type="inferred from homology"/>
<feature type="chain" id="PRO_1000135443" description="S-adenosylmethionine decarboxylase beta chain" evidence="1">
    <location>
        <begin position="1"/>
        <end position="111"/>
    </location>
</feature>
<feature type="chain" id="PRO_1000135444" description="S-adenosylmethionine decarboxylase alpha chain" evidence="1">
    <location>
        <begin position="112"/>
        <end position="264"/>
    </location>
</feature>
<feature type="active site" description="Schiff-base intermediate with substrate; via pyruvic acid" evidence="1">
    <location>
        <position position="112"/>
    </location>
</feature>
<feature type="active site" description="Proton acceptor; for processing activity" evidence="1">
    <location>
        <position position="117"/>
    </location>
</feature>
<feature type="active site" description="Proton donor; for catalytic activity" evidence="1">
    <location>
        <position position="140"/>
    </location>
</feature>
<feature type="site" description="Cleavage (non-hydrolytic); by autolysis" evidence="1">
    <location>
        <begin position="111"/>
        <end position="112"/>
    </location>
</feature>
<feature type="modified residue" description="Pyruvic acid (Ser); by autocatalysis" evidence="1">
    <location>
        <position position="112"/>
    </location>
</feature>
<comment type="function">
    <text evidence="1">Catalyzes the decarboxylation of S-adenosylmethionine to S-adenosylmethioninamine (dcAdoMet), the propylamine donor required for the synthesis of the polyamines spermine and spermidine from the diamine putrescine.</text>
</comment>
<comment type="catalytic activity">
    <reaction evidence="1">
        <text>S-adenosyl-L-methionine + H(+) = S-adenosyl 3-(methylsulfanyl)propylamine + CO2</text>
        <dbReference type="Rhea" id="RHEA:15981"/>
        <dbReference type="ChEBI" id="CHEBI:15378"/>
        <dbReference type="ChEBI" id="CHEBI:16526"/>
        <dbReference type="ChEBI" id="CHEBI:57443"/>
        <dbReference type="ChEBI" id="CHEBI:59789"/>
        <dbReference type="EC" id="4.1.1.50"/>
    </reaction>
</comment>
<comment type="cofactor">
    <cofactor evidence="1">
        <name>pyruvate</name>
        <dbReference type="ChEBI" id="CHEBI:15361"/>
    </cofactor>
    <text evidence="1">Binds 1 pyruvoyl group covalently per subunit.</text>
</comment>
<comment type="pathway">
    <text evidence="1">Amine and polyamine biosynthesis; S-adenosylmethioninamine biosynthesis; S-adenosylmethioninamine from S-adenosyl-L-methionine: step 1/1.</text>
</comment>
<comment type="subunit">
    <text evidence="1">Heterooctamer of four alpha and four beta chains arranged as a tetramer of alpha/beta heterodimers.</text>
</comment>
<comment type="PTM">
    <text evidence="1">Is synthesized initially as an inactive proenzyme. Formation of the active enzyme involves a self-maturation process in which the active site pyruvoyl group is generated from an internal serine residue via an autocatalytic post-translational modification. Two non-identical subunits are generated from the proenzyme in this reaction, and the pyruvate is formed at the N-terminus of the alpha chain, which is derived from the carboxyl end of the proenzyme. The post-translation cleavage follows an unusual pathway, termed non-hydrolytic serinolysis, in which the side chain hydroxyl group of the serine supplies its oxygen atom to form the C-terminus of the beta chain, while the remainder of the serine residue undergoes an oxidative deamination to produce ammonia and the pyruvoyl group blocking the N-terminus of the alpha chain.</text>
</comment>
<comment type="similarity">
    <text evidence="1">Belongs to the prokaryotic AdoMetDC family. Type 2 subfamily.</text>
</comment>
<sequence length="264" mass="30415">MKKLKLHGFNNLTKSLSFCIYDICYAKTTEERDGYIAYIDELYNANRLTEILSETCSIIGANILNIARQDYEPQGASVTILVSEEPVDPKLIDKTEHPGPLPETVVAHLDKSHICVHTYPESHPEGGLCTFRADIEVSTCGVISPLKALNYLIHQLESDIVTIDYRVRGFTRDINGMKHFIDHEINSIQNFMSDDMKALYDMVDVNVYQENIFHTKMLLKEFDLKHYMFHTKPEDLTDSERQEITAALWKEMREIYYGRNMPAV</sequence>
<protein>
    <recommendedName>
        <fullName evidence="1">S-adenosylmethionine decarboxylase proenzyme</fullName>
        <shortName evidence="1">AdoMetDC</shortName>
        <shortName evidence="1">SAMDC</shortName>
        <ecNumber evidence="1">4.1.1.50</ecNumber>
    </recommendedName>
    <component>
        <recommendedName>
            <fullName evidence="1">S-adenosylmethionine decarboxylase beta chain</fullName>
        </recommendedName>
    </component>
    <component>
        <recommendedName>
            <fullName evidence="1">S-adenosylmethionine decarboxylase alpha chain</fullName>
        </recommendedName>
    </component>
</protein>
<name>SPED_ECO27</name>
<organism>
    <name type="scientific">Escherichia coli O127:H6 (strain E2348/69 / EPEC)</name>
    <dbReference type="NCBI Taxonomy" id="574521"/>
    <lineage>
        <taxon>Bacteria</taxon>
        <taxon>Pseudomonadati</taxon>
        <taxon>Pseudomonadota</taxon>
        <taxon>Gammaproteobacteria</taxon>
        <taxon>Enterobacterales</taxon>
        <taxon>Enterobacteriaceae</taxon>
        <taxon>Escherichia</taxon>
    </lineage>
</organism>
<accession>B7UIG8</accession>
<dbReference type="EC" id="4.1.1.50" evidence="1"/>
<dbReference type="EMBL" id="FM180568">
    <property type="protein sequence ID" value="CAS07671.1"/>
    <property type="molecule type" value="Genomic_DNA"/>
</dbReference>
<dbReference type="RefSeq" id="WP_000734300.1">
    <property type="nucleotide sequence ID" value="NC_011601.1"/>
</dbReference>
<dbReference type="KEGG" id="ecg:E2348C_0123"/>
<dbReference type="HOGENOM" id="CLU_092007_0_0_6"/>
<dbReference type="UniPathway" id="UPA00331">
    <property type="reaction ID" value="UER00451"/>
</dbReference>
<dbReference type="Proteomes" id="UP000008205">
    <property type="component" value="Chromosome"/>
</dbReference>
<dbReference type="GO" id="GO:0005829">
    <property type="term" value="C:cytosol"/>
    <property type="evidence" value="ECO:0007669"/>
    <property type="project" value="TreeGrafter"/>
</dbReference>
<dbReference type="GO" id="GO:0004014">
    <property type="term" value="F:adenosylmethionine decarboxylase activity"/>
    <property type="evidence" value="ECO:0007669"/>
    <property type="project" value="UniProtKB-UniRule"/>
</dbReference>
<dbReference type="GO" id="GO:0008295">
    <property type="term" value="P:spermidine biosynthetic process"/>
    <property type="evidence" value="ECO:0007669"/>
    <property type="project" value="UniProtKB-UniRule"/>
</dbReference>
<dbReference type="FunFam" id="3.60.90.10:FF:000001">
    <property type="entry name" value="S-adenosylmethionine decarboxylase proenzyme"/>
    <property type="match status" value="1"/>
</dbReference>
<dbReference type="Gene3D" id="3.60.90.10">
    <property type="entry name" value="S-adenosylmethionine decarboxylase"/>
    <property type="match status" value="1"/>
</dbReference>
<dbReference type="HAMAP" id="MF_00465">
    <property type="entry name" value="AdoMetDC_2"/>
    <property type="match status" value="1"/>
</dbReference>
<dbReference type="InterPro" id="IPR003826">
    <property type="entry name" value="AdoMetDC_fam_prok"/>
</dbReference>
<dbReference type="InterPro" id="IPR009165">
    <property type="entry name" value="S-AdoMet_deCO2ase_bac"/>
</dbReference>
<dbReference type="InterPro" id="IPR016067">
    <property type="entry name" value="S-AdoMet_deCO2ase_core"/>
</dbReference>
<dbReference type="NCBIfam" id="TIGR03331">
    <property type="entry name" value="SAM_DCase_Eco"/>
    <property type="match status" value="1"/>
</dbReference>
<dbReference type="PANTHER" id="PTHR33866">
    <property type="entry name" value="S-ADENOSYLMETHIONINE DECARBOXYLASE PROENZYME"/>
    <property type="match status" value="1"/>
</dbReference>
<dbReference type="PANTHER" id="PTHR33866:SF1">
    <property type="entry name" value="S-ADENOSYLMETHIONINE DECARBOXYLASE PROENZYME"/>
    <property type="match status" value="1"/>
</dbReference>
<dbReference type="Pfam" id="PF02675">
    <property type="entry name" value="AdoMet_dc"/>
    <property type="match status" value="1"/>
</dbReference>
<dbReference type="PIRSF" id="PIRSF001356">
    <property type="entry name" value="SAM_decarboxylas"/>
    <property type="match status" value="1"/>
</dbReference>
<dbReference type="SUPFAM" id="SSF56276">
    <property type="entry name" value="S-adenosylmethionine decarboxylase"/>
    <property type="match status" value="1"/>
</dbReference>
<evidence type="ECO:0000255" key="1">
    <source>
        <dbReference type="HAMAP-Rule" id="MF_00465"/>
    </source>
</evidence>
<reference key="1">
    <citation type="journal article" date="2009" name="J. Bacteriol.">
        <title>Complete genome sequence and comparative genome analysis of enteropathogenic Escherichia coli O127:H6 strain E2348/69.</title>
        <authorList>
            <person name="Iguchi A."/>
            <person name="Thomson N.R."/>
            <person name="Ogura Y."/>
            <person name="Saunders D."/>
            <person name="Ooka T."/>
            <person name="Henderson I.R."/>
            <person name="Harris D."/>
            <person name="Asadulghani M."/>
            <person name="Kurokawa K."/>
            <person name="Dean P."/>
            <person name="Kenny B."/>
            <person name="Quail M.A."/>
            <person name="Thurston S."/>
            <person name="Dougan G."/>
            <person name="Hayashi T."/>
            <person name="Parkhill J."/>
            <person name="Frankel G."/>
        </authorList>
    </citation>
    <scope>NUCLEOTIDE SEQUENCE [LARGE SCALE GENOMIC DNA]</scope>
    <source>
        <strain>E2348/69 / EPEC</strain>
    </source>
</reference>
<gene>
    <name evidence="1" type="primary">speD</name>
    <name type="ordered locus">E2348C_0123</name>
</gene>
<keyword id="KW-0068">Autocatalytic cleavage</keyword>
<keyword id="KW-0210">Decarboxylase</keyword>
<keyword id="KW-0456">Lyase</keyword>
<keyword id="KW-0620">Polyamine biosynthesis</keyword>
<keyword id="KW-0670">Pyruvate</keyword>
<keyword id="KW-1185">Reference proteome</keyword>
<keyword id="KW-0949">S-adenosyl-L-methionine</keyword>
<keyword id="KW-0704">Schiff base</keyword>
<keyword id="KW-0745">Spermidine biosynthesis</keyword>
<keyword id="KW-0865">Zymogen</keyword>